<name>CH60_KLEP7</name>
<comment type="function">
    <text evidence="1">Together with its co-chaperonin GroES, plays an essential role in assisting protein folding. The GroEL-GroES system forms a nano-cage that allows encapsulation of the non-native substrate proteins and provides a physical environment optimized to promote and accelerate protein folding.</text>
</comment>
<comment type="catalytic activity">
    <reaction evidence="1">
        <text>ATP + H2O + a folded polypeptide = ADP + phosphate + an unfolded polypeptide.</text>
        <dbReference type="EC" id="5.6.1.7"/>
    </reaction>
</comment>
<comment type="subunit">
    <text evidence="1">Forms a cylinder of 14 subunits composed of two heptameric rings stacked back-to-back. Interacts with the co-chaperonin GroES.</text>
</comment>
<comment type="subcellular location">
    <subcellularLocation>
        <location evidence="1">Cytoplasm</location>
    </subcellularLocation>
</comment>
<comment type="similarity">
    <text evidence="1">Belongs to the chaperonin (HSP60) family.</text>
</comment>
<dbReference type="EC" id="5.6.1.7" evidence="1"/>
<dbReference type="EMBL" id="CP000647">
    <property type="protein sequence ID" value="ABR79887.1"/>
    <property type="molecule type" value="Genomic_DNA"/>
</dbReference>
<dbReference type="RefSeq" id="WP_002885441.1">
    <property type="nucleotide sequence ID" value="NC_009648.1"/>
</dbReference>
<dbReference type="SMR" id="A6TH53"/>
<dbReference type="STRING" id="272620.KPN_04533"/>
<dbReference type="jPOST" id="A6TH53"/>
<dbReference type="PaxDb" id="272620-KPN_04533"/>
<dbReference type="EnsemblBacteria" id="ABR79887">
    <property type="protein sequence ID" value="ABR79887"/>
    <property type="gene ID" value="KPN_04533"/>
</dbReference>
<dbReference type="KEGG" id="kpn:KPN_04533"/>
<dbReference type="HOGENOM" id="CLU_016503_3_0_6"/>
<dbReference type="Proteomes" id="UP000000265">
    <property type="component" value="Chromosome"/>
</dbReference>
<dbReference type="GO" id="GO:0005737">
    <property type="term" value="C:cytoplasm"/>
    <property type="evidence" value="ECO:0007669"/>
    <property type="project" value="UniProtKB-SubCell"/>
</dbReference>
<dbReference type="GO" id="GO:0005524">
    <property type="term" value="F:ATP binding"/>
    <property type="evidence" value="ECO:0007669"/>
    <property type="project" value="UniProtKB-UniRule"/>
</dbReference>
<dbReference type="GO" id="GO:0140662">
    <property type="term" value="F:ATP-dependent protein folding chaperone"/>
    <property type="evidence" value="ECO:0007669"/>
    <property type="project" value="InterPro"/>
</dbReference>
<dbReference type="GO" id="GO:0016853">
    <property type="term" value="F:isomerase activity"/>
    <property type="evidence" value="ECO:0007669"/>
    <property type="project" value="UniProtKB-KW"/>
</dbReference>
<dbReference type="GO" id="GO:0051082">
    <property type="term" value="F:unfolded protein binding"/>
    <property type="evidence" value="ECO:0007669"/>
    <property type="project" value="UniProtKB-UniRule"/>
</dbReference>
<dbReference type="GO" id="GO:0042026">
    <property type="term" value="P:protein refolding"/>
    <property type="evidence" value="ECO:0007669"/>
    <property type="project" value="UniProtKB-UniRule"/>
</dbReference>
<dbReference type="CDD" id="cd03344">
    <property type="entry name" value="GroEL"/>
    <property type="match status" value="1"/>
</dbReference>
<dbReference type="FunFam" id="1.10.560.10:FF:000001">
    <property type="entry name" value="60 kDa chaperonin"/>
    <property type="match status" value="1"/>
</dbReference>
<dbReference type="FunFam" id="3.50.7.10:FF:000001">
    <property type="entry name" value="60 kDa chaperonin"/>
    <property type="match status" value="1"/>
</dbReference>
<dbReference type="Gene3D" id="3.50.7.10">
    <property type="entry name" value="GroEL"/>
    <property type="match status" value="1"/>
</dbReference>
<dbReference type="Gene3D" id="1.10.560.10">
    <property type="entry name" value="GroEL-like equatorial domain"/>
    <property type="match status" value="1"/>
</dbReference>
<dbReference type="Gene3D" id="3.30.260.10">
    <property type="entry name" value="TCP-1-like chaperonin intermediate domain"/>
    <property type="match status" value="1"/>
</dbReference>
<dbReference type="HAMAP" id="MF_00600">
    <property type="entry name" value="CH60"/>
    <property type="match status" value="1"/>
</dbReference>
<dbReference type="InterPro" id="IPR018370">
    <property type="entry name" value="Chaperonin_Cpn60_CS"/>
</dbReference>
<dbReference type="InterPro" id="IPR001844">
    <property type="entry name" value="Cpn60/GroEL"/>
</dbReference>
<dbReference type="InterPro" id="IPR002423">
    <property type="entry name" value="Cpn60/GroEL/TCP-1"/>
</dbReference>
<dbReference type="InterPro" id="IPR027409">
    <property type="entry name" value="GroEL-like_apical_dom_sf"/>
</dbReference>
<dbReference type="InterPro" id="IPR027413">
    <property type="entry name" value="GROEL-like_equatorial_sf"/>
</dbReference>
<dbReference type="InterPro" id="IPR027410">
    <property type="entry name" value="TCP-1-like_intermed_sf"/>
</dbReference>
<dbReference type="NCBIfam" id="TIGR02348">
    <property type="entry name" value="GroEL"/>
    <property type="match status" value="1"/>
</dbReference>
<dbReference type="NCBIfam" id="NF000592">
    <property type="entry name" value="PRK00013.1"/>
    <property type="match status" value="1"/>
</dbReference>
<dbReference type="NCBIfam" id="NF009487">
    <property type="entry name" value="PRK12849.1"/>
    <property type="match status" value="1"/>
</dbReference>
<dbReference type="NCBIfam" id="NF009488">
    <property type="entry name" value="PRK12850.1"/>
    <property type="match status" value="1"/>
</dbReference>
<dbReference type="NCBIfam" id="NF009489">
    <property type="entry name" value="PRK12851.1"/>
    <property type="match status" value="1"/>
</dbReference>
<dbReference type="PANTHER" id="PTHR45633">
    <property type="entry name" value="60 KDA HEAT SHOCK PROTEIN, MITOCHONDRIAL"/>
    <property type="match status" value="1"/>
</dbReference>
<dbReference type="Pfam" id="PF00118">
    <property type="entry name" value="Cpn60_TCP1"/>
    <property type="match status" value="1"/>
</dbReference>
<dbReference type="PRINTS" id="PR00298">
    <property type="entry name" value="CHAPERONIN60"/>
</dbReference>
<dbReference type="SUPFAM" id="SSF52029">
    <property type="entry name" value="GroEL apical domain-like"/>
    <property type="match status" value="1"/>
</dbReference>
<dbReference type="SUPFAM" id="SSF48592">
    <property type="entry name" value="GroEL equatorial domain-like"/>
    <property type="match status" value="1"/>
</dbReference>
<dbReference type="SUPFAM" id="SSF54849">
    <property type="entry name" value="GroEL-intermediate domain like"/>
    <property type="match status" value="1"/>
</dbReference>
<dbReference type="PROSITE" id="PS00296">
    <property type="entry name" value="CHAPERONINS_CPN60"/>
    <property type="match status" value="1"/>
</dbReference>
<proteinExistence type="inferred from homology"/>
<reference key="1">
    <citation type="submission" date="2006-09" db="EMBL/GenBank/DDBJ databases">
        <authorList>
            <consortium name="The Klebsiella pneumonia Genome Sequencing Project"/>
            <person name="McClelland M."/>
            <person name="Sanderson E.K."/>
            <person name="Spieth J."/>
            <person name="Clifton W.S."/>
            <person name="Latreille P."/>
            <person name="Sabo A."/>
            <person name="Pepin K."/>
            <person name="Bhonagiri V."/>
            <person name="Porwollik S."/>
            <person name="Ali J."/>
            <person name="Wilson R.K."/>
        </authorList>
    </citation>
    <scope>NUCLEOTIDE SEQUENCE [LARGE SCALE GENOMIC DNA]</scope>
    <source>
        <strain>ATCC 700721 / MGH 78578</strain>
    </source>
</reference>
<gene>
    <name evidence="1" type="primary">groEL</name>
    <name evidence="1" type="synonym">groL</name>
    <name type="ordered locus">KPN78578_44630</name>
    <name type="ORF">KPN_04533</name>
</gene>
<protein>
    <recommendedName>
        <fullName evidence="1">Chaperonin GroEL</fullName>
        <ecNumber evidence="1">5.6.1.7</ecNumber>
    </recommendedName>
    <alternativeName>
        <fullName evidence="1">60 kDa chaperonin</fullName>
    </alternativeName>
    <alternativeName>
        <fullName evidence="1">Chaperonin-60</fullName>
        <shortName evidence="1">Cpn60</shortName>
    </alternativeName>
</protein>
<organism>
    <name type="scientific">Klebsiella pneumoniae subsp. pneumoniae (strain ATCC 700721 / MGH 78578)</name>
    <dbReference type="NCBI Taxonomy" id="272620"/>
    <lineage>
        <taxon>Bacteria</taxon>
        <taxon>Pseudomonadati</taxon>
        <taxon>Pseudomonadota</taxon>
        <taxon>Gammaproteobacteria</taxon>
        <taxon>Enterobacterales</taxon>
        <taxon>Enterobacteriaceae</taxon>
        <taxon>Klebsiella/Raoultella group</taxon>
        <taxon>Klebsiella</taxon>
        <taxon>Klebsiella pneumoniae complex</taxon>
    </lineage>
</organism>
<keyword id="KW-0067">ATP-binding</keyword>
<keyword id="KW-0143">Chaperone</keyword>
<keyword id="KW-0963">Cytoplasm</keyword>
<keyword id="KW-0413">Isomerase</keyword>
<keyword id="KW-0547">Nucleotide-binding</keyword>
<evidence type="ECO:0000255" key="1">
    <source>
        <dbReference type="HAMAP-Rule" id="MF_00600"/>
    </source>
</evidence>
<accession>A6TH53</accession>
<feature type="chain" id="PRO_1000025796" description="Chaperonin GroEL">
    <location>
        <begin position="1"/>
        <end position="548"/>
    </location>
</feature>
<feature type="binding site" evidence="1">
    <location>
        <begin position="30"/>
        <end position="33"/>
    </location>
    <ligand>
        <name>ATP</name>
        <dbReference type="ChEBI" id="CHEBI:30616"/>
    </ligand>
</feature>
<feature type="binding site" evidence="1">
    <location>
        <position position="51"/>
    </location>
    <ligand>
        <name>ATP</name>
        <dbReference type="ChEBI" id="CHEBI:30616"/>
    </ligand>
</feature>
<feature type="binding site" evidence="1">
    <location>
        <begin position="87"/>
        <end position="91"/>
    </location>
    <ligand>
        <name>ATP</name>
        <dbReference type="ChEBI" id="CHEBI:30616"/>
    </ligand>
</feature>
<feature type="binding site" evidence="1">
    <location>
        <position position="415"/>
    </location>
    <ligand>
        <name>ATP</name>
        <dbReference type="ChEBI" id="CHEBI:30616"/>
    </ligand>
</feature>
<feature type="binding site" evidence="1">
    <location>
        <begin position="479"/>
        <end position="481"/>
    </location>
    <ligand>
        <name>ATP</name>
        <dbReference type="ChEBI" id="CHEBI:30616"/>
    </ligand>
</feature>
<feature type="binding site" evidence="1">
    <location>
        <position position="495"/>
    </location>
    <ligand>
        <name>ATP</name>
        <dbReference type="ChEBI" id="CHEBI:30616"/>
    </ligand>
</feature>
<sequence>MAAKDVKFGNDARVKMLRGVNVLADAVKVTLGPKGRNVVLDKSFGAPTITKDGVSVAREIELEDKFENMGAQMVKEVASKANDAAGDGTTTATVLAQAIVNEGLKAVAAGMNPMDLKRGIDKAVLAAVEELKALSVPCSDSKAIAQVGTISANSDETVGKLIAEAMDKVGKEGVITVEDGTGLEDELDVVEGMQFDRGYLSPYFINKPDTGAVELESPFILLADKKISNIREMLPVLEAVAKAGKPLVIIAEDVEGEALATLVVNTMRGIVKVAAVKAPGFGDRRKAMLQDIATLTGGTVISEEIGMELEKATLEDLGQAKRVVINKDTTTIIDGVGEESAIQGRVAQIRKQIEEATSDYDREKLQERVAKLAGGVAVIKVGAATEVEMKEKKARVDDALHATRAAVEEGVVAGGGVALVRVAAKLAGLTGQNEDQNVGIKVALRAMEAPLRQIVSNAGEEPSVVANNVKAGDGNYGYNAATEEYGNMIDFGILDPTKVTRSALQYAASVAGLMITTECMVTDLPKGDAPDLGAAGGMGGMGGMGGMM</sequence>